<reference key="1">
    <citation type="journal article" date="2006" name="Theor. Appl. Genet.">
        <title>Complete chloroplast genome sequences of Solanum bulbocastanum, Solanum lycopersicum and comparative analyses with other Solanaceae genomes.</title>
        <authorList>
            <person name="Daniell H."/>
            <person name="Lee S.-B."/>
            <person name="Grevich J."/>
            <person name="Saski C."/>
            <person name="Quesada-Vargas T."/>
            <person name="Guda C."/>
            <person name="Tomkins J."/>
            <person name="Jansen R.K."/>
        </authorList>
    </citation>
    <scope>NUCLEOTIDE SEQUENCE [LARGE SCALE GENOMIC DNA]</scope>
    <source>
        <strain>cv. PT29</strain>
    </source>
</reference>
<gene>
    <name type="primary">rps3</name>
</gene>
<protein>
    <recommendedName>
        <fullName evidence="2">Small ribosomal subunit protein uS3c</fullName>
    </recommendedName>
    <alternativeName>
        <fullName>30S ribosomal protein S3, chloroplastic</fullName>
    </alternativeName>
</protein>
<keyword id="KW-0150">Chloroplast</keyword>
<keyword id="KW-0934">Plastid</keyword>
<keyword id="KW-0687">Ribonucleoprotein</keyword>
<keyword id="KW-0689">Ribosomal protein</keyword>
<keyword id="KW-0694">RNA-binding</keyword>
<keyword id="KW-0699">rRNA-binding</keyword>
<feature type="chain" id="PRO_0000230758" description="Small ribosomal subunit protein uS3c">
    <location>
        <begin position="1"/>
        <end position="218"/>
    </location>
</feature>
<feature type="domain" description="KH type-2">
    <location>
        <begin position="47"/>
        <end position="118"/>
    </location>
</feature>
<comment type="subunit">
    <text evidence="1">Part of the 30S ribosomal subunit.</text>
</comment>
<comment type="subcellular location">
    <subcellularLocation>
        <location>Plastid</location>
        <location>Chloroplast</location>
    </subcellularLocation>
</comment>
<comment type="similarity">
    <text evidence="2">Belongs to the universal ribosomal protein uS3 family.</text>
</comment>
<dbReference type="EMBL" id="DQ347958">
    <property type="protein sequence ID" value="ABC56251.1"/>
    <property type="molecule type" value="Genomic_DNA"/>
</dbReference>
<dbReference type="RefSeq" id="YP_538888.1">
    <property type="nucleotide sequence ID" value="NC_007943.1"/>
</dbReference>
<dbReference type="SMR" id="Q2MIE9"/>
<dbReference type="GeneID" id="3989421"/>
<dbReference type="GO" id="GO:0009507">
    <property type="term" value="C:chloroplast"/>
    <property type="evidence" value="ECO:0007669"/>
    <property type="project" value="UniProtKB-SubCell"/>
</dbReference>
<dbReference type="GO" id="GO:0022627">
    <property type="term" value="C:cytosolic small ribosomal subunit"/>
    <property type="evidence" value="ECO:0007669"/>
    <property type="project" value="TreeGrafter"/>
</dbReference>
<dbReference type="GO" id="GO:0019843">
    <property type="term" value="F:rRNA binding"/>
    <property type="evidence" value="ECO:0007669"/>
    <property type="project" value="UniProtKB-UniRule"/>
</dbReference>
<dbReference type="GO" id="GO:0003735">
    <property type="term" value="F:structural constituent of ribosome"/>
    <property type="evidence" value="ECO:0007669"/>
    <property type="project" value="InterPro"/>
</dbReference>
<dbReference type="GO" id="GO:0006412">
    <property type="term" value="P:translation"/>
    <property type="evidence" value="ECO:0007669"/>
    <property type="project" value="UniProtKB-UniRule"/>
</dbReference>
<dbReference type="CDD" id="cd02412">
    <property type="entry name" value="KH-II_30S_S3"/>
    <property type="match status" value="1"/>
</dbReference>
<dbReference type="FunFam" id="3.30.1140.32:FF:000003">
    <property type="entry name" value="30S ribosomal protein S3, chloroplastic"/>
    <property type="match status" value="1"/>
</dbReference>
<dbReference type="FunFam" id="3.30.300.20:FF:000008">
    <property type="entry name" value="30S ribosomal protein S3, chloroplastic"/>
    <property type="match status" value="1"/>
</dbReference>
<dbReference type="Gene3D" id="3.30.300.20">
    <property type="match status" value="1"/>
</dbReference>
<dbReference type="Gene3D" id="3.30.1140.32">
    <property type="entry name" value="Ribosomal protein S3, C-terminal domain"/>
    <property type="match status" value="1"/>
</dbReference>
<dbReference type="HAMAP" id="MF_01309_B">
    <property type="entry name" value="Ribosomal_uS3_B"/>
    <property type="match status" value="1"/>
</dbReference>
<dbReference type="InterPro" id="IPR015946">
    <property type="entry name" value="KH_dom-like_a/b"/>
</dbReference>
<dbReference type="InterPro" id="IPR004044">
    <property type="entry name" value="KH_dom_type_2"/>
</dbReference>
<dbReference type="InterPro" id="IPR009019">
    <property type="entry name" value="KH_sf_prok-type"/>
</dbReference>
<dbReference type="InterPro" id="IPR036419">
    <property type="entry name" value="Ribosomal_S3_C_sf"/>
</dbReference>
<dbReference type="InterPro" id="IPR005704">
    <property type="entry name" value="Ribosomal_uS3_bac-typ"/>
</dbReference>
<dbReference type="InterPro" id="IPR001351">
    <property type="entry name" value="Ribosomal_uS3_C"/>
</dbReference>
<dbReference type="InterPro" id="IPR018280">
    <property type="entry name" value="Ribosomal_uS3_CS"/>
</dbReference>
<dbReference type="NCBIfam" id="TIGR01009">
    <property type="entry name" value="rpsC_bact"/>
    <property type="match status" value="1"/>
</dbReference>
<dbReference type="PANTHER" id="PTHR11760">
    <property type="entry name" value="30S/40S RIBOSOMAL PROTEIN S3"/>
    <property type="match status" value="1"/>
</dbReference>
<dbReference type="PANTHER" id="PTHR11760:SF19">
    <property type="entry name" value="SMALL RIBOSOMAL SUBUNIT PROTEIN US3C"/>
    <property type="match status" value="1"/>
</dbReference>
<dbReference type="Pfam" id="PF00189">
    <property type="entry name" value="Ribosomal_S3_C"/>
    <property type="match status" value="1"/>
</dbReference>
<dbReference type="SUPFAM" id="SSF54814">
    <property type="entry name" value="Prokaryotic type KH domain (KH-domain type II)"/>
    <property type="match status" value="1"/>
</dbReference>
<dbReference type="SUPFAM" id="SSF54821">
    <property type="entry name" value="Ribosomal protein S3 C-terminal domain"/>
    <property type="match status" value="1"/>
</dbReference>
<dbReference type="PROSITE" id="PS50823">
    <property type="entry name" value="KH_TYPE_2"/>
    <property type="match status" value="1"/>
</dbReference>
<dbReference type="PROSITE" id="PS00548">
    <property type="entry name" value="RIBOSOMAL_S3"/>
    <property type="match status" value="1"/>
</dbReference>
<proteinExistence type="inferred from homology"/>
<geneLocation type="chloroplast"/>
<sequence>MGQKINPLGFRLGTTQGHHSLWFSQPKNYSEGLQEDKKIRDCIKNYVQKNMRTSSGIEGIARIEIQKRIDLIQVIIFMGFPKLLIESRPRGIEELQMTLQKEFNCVNRKLNIAVTRIAKPYGNPNILAEFIAGQLKNRVSFRKAMKKAIELTEQADTKGIQIQIAGRIDGKEIARVEWIREGRVPLQTIRAKIDYCSYTVRTIYGILGIKIWIFLDEE</sequence>
<name>RR3_SOLBU</name>
<evidence type="ECO:0000250" key="1"/>
<evidence type="ECO:0000305" key="2"/>
<organism>
    <name type="scientific">Solanum bulbocastanum</name>
    <name type="common">Wild potato</name>
    <dbReference type="NCBI Taxonomy" id="147425"/>
    <lineage>
        <taxon>Eukaryota</taxon>
        <taxon>Viridiplantae</taxon>
        <taxon>Streptophyta</taxon>
        <taxon>Embryophyta</taxon>
        <taxon>Tracheophyta</taxon>
        <taxon>Spermatophyta</taxon>
        <taxon>Magnoliopsida</taxon>
        <taxon>eudicotyledons</taxon>
        <taxon>Gunneridae</taxon>
        <taxon>Pentapetalae</taxon>
        <taxon>asterids</taxon>
        <taxon>lamiids</taxon>
        <taxon>Solanales</taxon>
        <taxon>Solanaceae</taxon>
        <taxon>Solanoideae</taxon>
        <taxon>Solaneae</taxon>
        <taxon>Solanum</taxon>
    </lineage>
</organism>
<accession>Q2MIE9</accession>